<keyword id="KW-0009">Actin-binding</keyword>
<keyword id="KW-0966">Cell projection</keyword>
<keyword id="KW-0963">Cytoplasm</keyword>
<keyword id="KW-0206">Cytoskeleton</keyword>
<keyword id="KW-1185">Reference proteome</keyword>
<comment type="function">
    <text evidence="2 4">Functions as a component of the Arp2/3 complex which is involved in regulation of actin polymerization and together with an activating nucleation-promoting factor (NPF) mediates the formation of branched actin networks. Seems to contact the pointed end of the daughter actin filament. The Arp2/3 complex is involved in organizing the actin system in cell motility and chemotaxis, in phagocytosis and macropinocytosis, at late steps of endosome processing, and in mitosis. In concert with a group of other proteins, the Arp2/3 complex plays a general role in the rapid activation and adaptation of the actin system to its multiple functions.</text>
</comment>
<comment type="subunit">
    <text evidence="1 3">Component of the Arp2/3 complex composed of arpB/Arp2, arpC/Arp3, arcA/p41-arc, arcB/p34-arc, arcC/p21-arc, arcD/p20-arc and arcE/p16-arc. Interacts with carmil (via the region between the LRR domain and COOH-terminal proline-rich domain); carmil is required for Arp2/3-dependent actin nucleation. Arp2/3 complex, MyoB, MyoC, and the alpha and beta subunits of capping protein all form a larger complex with carmil.</text>
</comment>
<comment type="subcellular location">
    <subcellularLocation>
        <location>Cytoplasm</location>
        <location>Cytoskeleton</location>
    </subcellularLocation>
    <subcellularLocation>
        <location>Cell projection</location>
    </subcellularLocation>
    <subcellularLocation>
        <location>Cytoplasm</location>
        <location>Cytosol</location>
    </subcellularLocation>
    <subcellularLocation>
        <location>Cytoplasm</location>
        <location>Cell cortex</location>
    </subcellularLocation>
    <subcellularLocation>
        <location>Cell projection</location>
        <location>Pseudopodium</location>
    </subcellularLocation>
</comment>
<comment type="similarity">
    <text evidence="5">Belongs to the ARPC2 family.</text>
</comment>
<organism>
    <name type="scientific">Dictyostelium discoideum</name>
    <name type="common">Social amoeba</name>
    <dbReference type="NCBI Taxonomy" id="44689"/>
    <lineage>
        <taxon>Eukaryota</taxon>
        <taxon>Amoebozoa</taxon>
        <taxon>Evosea</taxon>
        <taxon>Eumycetozoa</taxon>
        <taxon>Dictyostelia</taxon>
        <taxon>Dictyosteliales</taxon>
        <taxon>Dictyosteliaceae</taxon>
        <taxon>Dictyostelium</taxon>
    </lineage>
</organism>
<evidence type="ECO:0000269" key="1">
    <source>
    </source>
</evidence>
<evidence type="ECO:0000269" key="2">
    <source>
    </source>
</evidence>
<evidence type="ECO:0000269" key="3">
    <source>
    </source>
</evidence>
<evidence type="ECO:0000269" key="4">
    <source>
    </source>
</evidence>
<evidence type="ECO:0000305" key="5"/>
<name>ARPC2_DICDI</name>
<proteinExistence type="evidence at protein level"/>
<dbReference type="EMBL" id="AF095931">
    <property type="protein sequence ID" value="AAC99778.1"/>
    <property type="molecule type" value="mRNA"/>
</dbReference>
<dbReference type="EMBL" id="AAFI02000047">
    <property type="protein sequence ID" value="EAL65986.1"/>
    <property type="molecule type" value="Genomic_DNA"/>
</dbReference>
<dbReference type="RefSeq" id="XP_639348.1">
    <property type="nucleotide sequence ID" value="XM_634256.1"/>
</dbReference>
<dbReference type="SMR" id="O96623"/>
<dbReference type="FunCoup" id="O96623">
    <property type="interactions" value="653"/>
</dbReference>
<dbReference type="STRING" id="44689.O96623"/>
<dbReference type="PaxDb" id="44689-DDB0214935"/>
<dbReference type="EnsemblProtists" id="EAL65986">
    <property type="protein sequence ID" value="EAL65986"/>
    <property type="gene ID" value="DDB_G0282813"/>
</dbReference>
<dbReference type="GeneID" id="8623789"/>
<dbReference type="KEGG" id="ddi:DDB_G0282813"/>
<dbReference type="dictyBase" id="DDB_G0282813">
    <property type="gene designation" value="arcB"/>
</dbReference>
<dbReference type="VEuPathDB" id="AmoebaDB:DDB_G0282813"/>
<dbReference type="eggNOG" id="KOG2826">
    <property type="taxonomic scope" value="Eukaryota"/>
</dbReference>
<dbReference type="HOGENOM" id="CLU_059439_1_0_1"/>
<dbReference type="InParanoid" id="O96623"/>
<dbReference type="OMA" id="FRSYFHY"/>
<dbReference type="PhylomeDB" id="O96623"/>
<dbReference type="Reactome" id="R-DDI-2029482">
    <property type="pathway name" value="Regulation of actin dynamics for phagocytic cup formation"/>
</dbReference>
<dbReference type="Reactome" id="R-DDI-5663213">
    <property type="pathway name" value="RHO GTPases Activate WASPs and WAVEs"/>
</dbReference>
<dbReference type="PRO" id="PR:O96623"/>
<dbReference type="Proteomes" id="UP000002195">
    <property type="component" value="Chromosome 3"/>
</dbReference>
<dbReference type="GO" id="GO:0005885">
    <property type="term" value="C:Arp2/3 protein complex"/>
    <property type="evidence" value="ECO:0000314"/>
    <property type="project" value="dictyBase"/>
</dbReference>
<dbReference type="GO" id="GO:0005938">
    <property type="term" value="C:cell cortex"/>
    <property type="evidence" value="ECO:0007669"/>
    <property type="project" value="UniProtKB-SubCell"/>
</dbReference>
<dbReference type="GO" id="GO:0005829">
    <property type="term" value="C:cytosol"/>
    <property type="evidence" value="ECO:0007669"/>
    <property type="project" value="UniProtKB-SubCell"/>
</dbReference>
<dbReference type="GO" id="GO:0031143">
    <property type="term" value="C:pseudopodium"/>
    <property type="evidence" value="ECO:0007669"/>
    <property type="project" value="UniProtKB-SubCell"/>
</dbReference>
<dbReference type="GO" id="GO:0051015">
    <property type="term" value="F:actin filament binding"/>
    <property type="evidence" value="ECO:0000318"/>
    <property type="project" value="GO_Central"/>
</dbReference>
<dbReference type="GO" id="GO:0005200">
    <property type="term" value="F:structural constituent of cytoskeleton"/>
    <property type="evidence" value="ECO:0000318"/>
    <property type="project" value="GO_Central"/>
</dbReference>
<dbReference type="GO" id="GO:0030042">
    <property type="term" value="P:actin filament depolymerization"/>
    <property type="evidence" value="ECO:0000304"/>
    <property type="project" value="dictyBase"/>
</dbReference>
<dbReference type="GO" id="GO:0030041">
    <property type="term" value="P:actin filament polymerization"/>
    <property type="evidence" value="ECO:0000315"/>
    <property type="project" value="dictyBase"/>
</dbReference>
<dbReference type="GO" id="GO:0045010">
    <property type="term" value="P:actin nucleation"/>
    <property type="evidence" value="ECO:0000304"/>
    <property type="project" value="dictyBase"/>
</dbReference>
<dbReference type="GO" id="GO:0034314">
    <property type="term" value="P:Arp2/3 complex-mediated actin nucleation"/>
    <property type="evidence" value="ECO:0000318"/>
    <property type="project" value="GO_Central"/>
</dbReference>
<dbReference type="GO" id="GO:0006887">
    <property type="term" value="P:exocytosis"/>
    <property type="evidence" value="ECO:0000270"/>
    <property type="project" value="dictyBase"/>
</dbReference>
<dbReference type="GO" id="GO:0006909">
    <property type="term" value="P:phagocytosis"/>
    <property type="evidence" value="ECO:0000270"/>
    <property type="project" value="dictyBase"/>
</dbReference>
<dbReference type="FunFam" id="3.30.1460.20:FF:000009">
    <property type="entry name" value="Arp2/3 complex 34 kDa subunit"/>
    <property type="match status" value="1"/>
</dbReference>
<dbReference type="Gene3D" id="3.30.1460.20">
    <property type="match status" value="2"/>
</dbReference>
<dbReference type="InterPro" id="IPR007188">
    <property type="entry name" value="ARPC2"/>
</dbReference>
<dbReference type="InterPro" id="IPR034666">
    <property type="entry name" value="ARPC2/4"/>
</dbReference>
<dbReference type="PANTHER" id="PTHR12058:SF0">
    <property type="entry name" value="ACTIN-RELATED PROTEIN 2_3 COMPLEX SUBUNIT 2"/>
    <property type="match status" value="1"/>
</dbReference>
<dbReference type="PANTHER" id="PTHR12058">
    <property type="entry name" value="ARP2/3 COMPLEX 34 KDA SUBUNIT"/>
    <property type="match status" value="1"/>
</dbReference>
<dbReference type="Pfam" id="PF04045">
    <property type="entry name" value="P34-Arc"/>
    <property type="match status" value="1"/>
</dbReference>
<dbReference type="SUPFAM" id="SSF69645">
    <property type="entry name" value="Arp2/3 complex subunits"/>
    <property type="match status" value="2"/>
</dbReference>
<reference key="1">
    <citation type="journal article" date="2001" name="Cell Motil. Cytoskeleton">
        <title>Dynamics of the Dictyostelium Arp2/3 complex in endocytosis, cytokinesis, and chemotaxis.</title>
        <authorList>
            <person name="Insall R."/>
            <person name="Mueller-Taubenberger A."/>
            <person name="Machesky L."/>
            <person name="Koehler J."/>
            <person name="Simmeth E."/>
            <person name="Atkinson S.J."/>
            <person name="Weber I."/>
            <person name="Gerisch G."/>
        </authorList>
    </citation>
    <scope>NUCLEOTIDE SEQUENCE [MRNA]</scope>
    <scope>FUNCTION</scope>
    <scope>SUBCELLULAR LOCATION</scope>
    <source>
        <strain>AX3</strain>
    </source>
</reference>
<reference key="2">
    <citation type="journal article" date="2005" name="Nature">
        <title>The genome of the social amoeba Dictyostelium discoideum.</title>
        <authorList>
            <person name="Eichinger L."/>
            <person name="Pachebat J.A."/>
            <person name="Gloeckner G."/>
            <person name="Rajandream M.A."/>
            <person name="Sucgang R."/>
            <person name="Berriman M."/>
            <person name="Song J."/>
            <person name="Olsen R."/>
            <person name="Szafranski K."/>
            <person name="Xu Q."/>
            <person name="Tunggal B."/>
            <person name="Kummerfeld S."/>
            <person name="Madera M."/>
            <person name="Konfortov B.A."/>
            <person name="Rivero F."/>
            <person name="Bankier A.T."/>
            <person name="Lehmann R."/>
            <person name="Hamlin N."/>
            <person name="Davies R."/>
            <person name="Gaudet P."/>
            <person name="Fey P."/>
            <person name="Pilcher K."/>
            <person name="Chen G."/>
            <person name="Saunders D."/>
            <person name="Sodergren E.J."/>
            <person name="Davis P."/>
            <person name="Kerhornou A."/>
            <person name="Nie X."/>
            <person name="Hall N."/>
            <person name="Anjard C."/>
            <person name="Hemphill L."/>
            <person name="Bason N."/>
            <person name="Farbrother P."/>
            <person name="Desany B."/>
            <person name="Just E."/>
            <person name="Morio T."/>
            <person name="Rost R."/>
            <person name="Churcher C.M."/>
            <person name="Cooper J."/>
            <person name="Haydock S."/>
            <person name="van Driessche N."/>
            <person name="Cronin A."/>
            <person name="Goodhead I."/>
            <person name="Muzny D.M."/>
            <person name="Mourier T."/>
            <person name="Pain A."/>
            <person name="Lu M."/>
            <person name="Harper D."/>
            <person name="Lindsay R."/>
            <person name="Hauser H."/>
            <person name="James K.D."/>
            <person name="Quiles M."/>
            <person name="Madan Babu M."/>
            <person name="Saito T."/>
            <person name="Buchrieser C."/>
            <person name="Wardroper A."/>
            <person name="Felder M."/>
            <person name="Thangavelu M."/>
            <person name="Johnson D."/>
            <person name="Knights A."/>
            <person name="Loulseged H."/>
            <person name="Mungall K.L."/>
            <person name="Oliver K."/>
            <person name="Price C."/>
            <person name="Quail M.A."/>
            <person name="Urushihara H."/>
            <person name="Hernandez J."/>
            <person name="Rabbinowitsch E."/>
            <person name="Steffen D."/>
            <person name="Sanders M."/>
            <person name="Ma J."/>
            <person name="Kohara Y."/>
            <person name="Sharp S."/>
            <person name="Simmonds M.N."/>
            <person name="Spiegler S."/>
            <person name="Tivey A."/>
            <person name="Sugano S."/>
            <person name="White B."/>
            <person name="Walker D."/>
            <person name="Woodward J.R."/>
            <person name="Winckler T."/>
            <person name="Tanaka Y."/>
            <person name="Shaulsky G."/>
            <person name="Schleicher M."/>
            <person name="Weinstock G.M."/>
            <person name="Rosenthal A."/>
            <person name="Cox E.C."/>
            <person name="Chisholm R.L."/>
            <person name="Gibbs R.A."/>
            <person name="Loomis W.F."/>
            <person name="Platzer M."/>
            <person name="Kay R.R."/>
            <person name="Williams J.G."/>
            <person name="Dear P.H."/>
            <person name="Noegel A.A."/>
            <person name="Barrell B.G."/>
            <person name="Kuspa A."/>
        </authorList>
    </citation>
    <scope>NUCLEOTIDE SEQUENCE [LARGE SCALE GENOMIC DNA]</scope>
    <source>
        <strain>AX4</strain>
    </source>
</reference>
<reference key="3">
    <citation type="journal article" date="2001" name="J. Cell Biol.">
        <title>The Dictyostelium CARMIL protein links capping protein and the Arp2/3 complex to type I myosins through their SH3 domains.</title>
        <authorList>
            <person name="Jung G."/>
            <person name="Remmert K."/>
            <person name="Wu X."/>
            <person name="Volosky J.M."/>
            <person name="Hammer J.A. III"/>
        </authorList>
    </citation>
    <scope>SUBCELLULAR LOCATION</scope>
    <scope>SUBUNIT</scope>
</reference>
<reference key="4">
    <citation type="journal article" date="2006" name="Eur. J. Cell Biol.">
        <title>Identification and isolation of Dictyostelium microtubule-associated protein interactors by tandem affinity purification.</title>
        <authorList>
            <person name="Koch K.V."/>
            <person name="Reinders Y."/>
            <person name="Ho T.-H."/>
            <person name="Sickmann A."/>
            <person name="Graef R."/>
        </authorList>
    </citation>
    <scope>IDENTIFICATION BY MASS SPECTROMETRY [LARGE SCALE ANALYSIS]</scope>
    <source>
        <strain>AX2</strain>
    </source>
</reference>
<reference key="5">
    <citation type="journal article" date="2007" name="Exp. Cell Res.">
        <title>Mutants in the Dictyostelium Arp2/3 complex and chemoattractant-induced actin polymerization.</title>
        <authorList>
            <person name="Langridge P.D."/>
            <person name="Kay R.R."/>
        </authorList>
    </citation>
    <scope>FUNCTION</scope>
    <scope>MUTAGENESIS</scope>
</reference>
<reference key="6">
    <citation type="journal article" date="2007" name="Protein Expr. Purif.">
        <title>Vectors for expression of proteins with single or combinatorial fluorescent protein and tandem affinity purification tags in Dictyostelium.</title>
        <authorList>
            <person name="Meima M.E."/>
            <person name="Weening K.E."/>
            <person name="Schaap P."/>
        </authorList>
    </citation>
    <scope>IDENTIFICATION IN THE ARP2/3 COMPLEX</scope>
    <scope>IDENTIFICATION BY MASS SPECTROMETRY</scope>
</reference>
<gene>
    <name type="primary">arcB</name>
    <name type="synonym">Arc35</name>
    <name type="synonym">arpE</name>
    <name type="ORF">DDB_G0282813</name>
</gene>
<accession>O96623</accession>
<accession>Q54RY9</accession>
<protein>
    <recommendedName>
        <fullName>Actin-related protein 2/3 complex subunit 2</fullName>
    </recommendedName>
    <alternativeName>
        <fullName>Arp2/3 complex 34 kDa subunit</fullName>
        <shortName>p34-ARC</shortName>
    </alternativeName>
</protein>
<feature type="chain" id="PRO_0000124036" description="Actin-related protein 2/3 complex subunit 2">
    <location>
        <begin position="1"/>
        <end position="293"/>
    </location>
</feature>
<sequence length="293" mass="32932">MLLLETHNRILYDEVISHFEGDRRVNNIFADFDGVKFNVQTSDDKSSLMVSVSLHAAADLLKNGGSALLKSVYGDMLQAKPEGGYDVTLVIQSSFSGNKEELAKKVSLLKRHLVAAPFLMVFEGIEAKKPLPEIIAINYRTDETFYLKPQGDNVIVIFDIAFKDADDVILSKIFLQSFVDVRKTISNVPSITFSQKDPPLELKGVKGVRAGQANHGFVSFVLFPAHIKKPQESADLIQTFRDYLHYHIKCAKGYMHTSMRNRVESLIQVLNRAKPEPVNTVKRTITGKFFKQN</sequence>